<comment type="function">
    <text evidence="1">Part of the Sec protein translocase complex. Interacts with the SecYEG preprotein conducting channel. Has a central role in coupling the hydrolysis of ATP to the transfer of proteins into and across the cell membrane, serving as an ATP-driven molecular motor driving the stepwise translocation of polypeptide chains across the membrane.</text>
</comment>
<comment type="catalytic activity">
    <reaction evidence="1">
        <text>ATP + H2O + cellular proteinSide 1 = ADP + phosphate + cellular proteinSide 2.</text>
        <dbReference type="EC" id="7.4.2.8"/>
    </reaction>
</comment>
<comment type="subunit">
    <text evidence="1 2">Monomer and homodimer (By similarity). Part of the essential Sec protein translocation apparatus which comprises SecA, SecYEG and auxiliary proteins SecDF. Other proteins may also be involved. A single SecA monomer interacts with SecY in the channel.</text>
</comment>
<comment type="subcellular location">
    <subcellularLocation>
        <location evidence="1">Cell inner membrane</location>
        <topology evidence="1">Peripheral membrane protein</topology>
        <orientation evidence="1">Cytoplasmic side</orientation>
    </subcellularLocation>
    <subcellularLocation>
        <location evidence="1">Cytoplasm</location>
    </subcellularLocation>
    <text evidence="1">Distribution is 50-50.</text>
</comment>
<comment type="similarity">
    <text evidence="1">Belongs to the SecA family.</text>
</comment>
<feature type="chain" id="PRO_0000321023" description="Protein translocase subunit SecA">
    <location>
        <begin position="1"/>
        <end position="871"/>
    </location>
</feature>
<feature type="binding site" evidence="1">
    <location>
        <position position="80"/>
    </location>
    <ligand>
        <name>ATP</name>
        <dbReference type="ChEBI" id="CHEBI:30616"/>
    </ligand>
</feature>
<feature type="binding site" evidence="1">
    <location>
        <begin position="98"/>
        <end position="102"/>
    </location>
    <ligand>
        <name>ATP</name>
        <dbReference type="ChEBI" id="CHEBI:30616"/>
    </ligand>
</feature>
<feature type="binding site" evidence="1">
    <location>
        <position position="537"/>
    </location>
    <ligand>
        <name>ATP</name>
        <dbReference type="ChEBI" id="CHEBI:30616"/>
    </ligand>
</feature>
<feature type="helix" evidence="4">
    <location>
        <begin position="6"/>
        <end position="30"/>
    </location>
</feature>
<feature type="helix" evidence="4">
    <location>
        <begin position="33"/>
        <end position="46"/>
    </location>
</feature>
<feature type="helix" evidence="4">
    <location>
        <begin position="50"/>
        <end position="55"/>
    </location>
</feature>
<feature type="helix" evidence="4">
    <location>
        <begin position="57"/>
        <end position="72"/>
    </location>
</feature>
<feature type="helix" evidence="4">
    <location>
        <begin position="78"/>
        <end position="88"/>
    </location>
</feature>
<feature type="strand" evidence="4">
    <location>
        <begin position="92"/>
        <end position="94"/>
    </location>
</feature>
<feature type="helix" evidence="4">
    <location>
        <begin position="101"/>
        <end position="104"/>
    </location>
</feature>
<feature type="helix" evidence="4">
    <location>
        <begin position="106"/>
        <end position="113"/>
    </location>
</feature>
<feature type="strand" evidence="4">
    <location>
        <begin position="120"/>
        <end position="125"/>
    </location>
</feature>
<feature type="helix" evidence="4">
    <location>
        <begin position="126"/>
        <end position="142"/>
    </location>
</feature>
<feature type="strand" evidence="4">
    <location>
        <begin position="147"/>
        <end position="150"/>
    </location>
</feature>
<feature type="turn" evidence="3">
    <location>
        <begin position="152"/>
        <end position="154"/>
    </location>
</feature>
<feature type="strand" evidence="4">
    <location>
        <begin position="156"/>
        <end position="163"/>
    </location>
</feature>
<feature type="helix" evidence="4">
    <location>
        <begin position="164"/>
        <end position="172"/>
    </location>
</feature>
<feature type="strand" evidence="3">
    <location>
        <begin position="184"/>
        <end position="186"/>
    </location>
</feature>
<feature type="helix" evidence="4">
    <location>
        <begin position="189"/>
        <end position="191"/>
    </location>
</feature>
<feature type="helix" evidence="4">
    <location>
        <begin position="194"/>
        <end position="199"/>
    </location>
</feature>
<feature type="strand" evidence="4">
    <location>
        <begin position="202"/>
        <end position="206"/>
    </location>
</feature>
<feature type="helix" evidence="4">
    <location>
        <begin position="209"/>
        <end position="214"/>
    </location>
</feature>
<feature type="strand" evidence="4">
    <location>
        <begin position="215"/>
        <end position="221"/>
    </location>
</feature>
<feature type="helix" evidence="4">
    <location>
        <begin position="222"/>
        <end position="232"/>
    </location>
</feature>
<feature type="helix" evidence="4">
    <location>
        <begin position="238"/>
        <end position="240"/>
    </location>
</feature>
<feature type="strand" evidence="4">
    <location>
        <begin position="248"/>
        <end position="253"/>
    </location>
</feature>
<feature type="helix" evidence="4">
    <location>
        <begin position="254"/>
        <end position="258"/>
    </location>
</feature>
<feature type="helix" evidence="4">
    <location>
        <begin position="261"/>
        <end position="263"/>
    </location>
</feature>
<feature type="strand" evidence="4">
    <location>
        <begin position="266"/>
        <end position="271"/>
    </location>
</feature>
<feature type="helix" evidence="4">
    <location>
        <begin position="276"/>
        <end position="286"/>
    </location>
</feature>
<feature type="turn" evidence="4">
    <location>
        <begin position="291"/>
        <end position="293"/>
    </location>
</feature>
<feature type="strand" evidence="4">
    <location>
        <begin position="294"/>
        <end position="298"/>
    </location>
</feature>
<feature type="turn" evidence="4">
    <location>
        <begin position="299"/>
        <end position="302"/>
    </location>
</feature>
<feature type="strand" evidence="4">
    <location>
        <begin position="303"/>
        <end position="306"/>
    </location>
</feature>
<feature type="helix" evidence="4">
    <location>
        <begin position="308"/>
        <end position="318"/>
    </location>
</feature>
<feature type="helix" evidence="4">
    <location>
        <begin position="326"/>
        <end position="328"/>
    </location>
</feature>
<feature type="helix" evidence="4">
    <location>
        <begin position="329"/>
        <end position="343"/>
    </location>
</feature>
<feature type="turn" evidence="4">
    <location>
        <begin position="347"/>
        <end position="349"/>
    </location>
</feature>
<feature type="strand" evidence="4">
    <location>
        <begin position="350"/>
        <end position="354"/>
    </location>
</feature>
<feature type="strand" evidence="4">
    <location>
        <begin position="357"/>
        <end position="361"/>
    </location>
</feature>
<feature type="turn" evidence="4">
    <location>
        <begin position="363"/>
        <end position="365"/>
    </location>
</feature>
<feature type="helix" evidence="3">
    <location>
        <begin position="375"/>
        <end position="377"/>
    </location>
</feature>
<feature type="helix" evidence="4">
    <location>
        <begin position="378"/>
        <end position="385"/>
    </location>
</feature>
<feature type="strand" evidence="4">
    <location>
        <begin position="394"/>
        <end position="400"/>
    </location>
</feature>
<feature type="helix" evidence="4">
    <location>
        <begin position="402"/>
        <end position="406"/>
    </location>
</feature>
<feature type="strand" evidence="4">
    <location>
        <begin position="409"/>
        <end position="417"/>
    </location>
</feature>
<feature type="helix" evidence="4">
    <location>
        <begin position="420"/>
        <end position="422"/>
    </location>
</feature>
<feature type="helix" evidence="4">
    <location>
        <begin position="423"/>
        <end position="430"/>
    </location>
</feature>
<feature type="strand" evidence="4">
    <location>
        <begin position="434"/>
        <end position="436"/>
    </location>
</feature>
<feature type="strand" evidence="4">
    <location>
        <begin position="451"/>
        <end position="455"/>
    </location>
</feature>
<feature type="helix" evidence="4">
    <location>
        <begin position="456"/>
        <end position="473"/>
    </location>
</feature>
<feature type="strand" evidence="4">
    <location>
        <begin position="477"/>
        <end position="482"/>
    </location>
</feature>
<feature type="helix" evidence="4">
    <location>
        <begin position="484"/>
        <end position="497"/>
    </location>
</feature>
<feature type="strand" evidence="4">
    <location>
        <begin position="502"/>
        <end position="504"/>
    </location>
</feature>
<feature type="helix" evidence="4">
    <location>
        <begin position="509"/>
        <end position="516"/>
    </location>
</feature>
<feature type="turn" evidence="4">
    <location>
        <begin position="517"/>
        <end position="520"/>
    </location>
</feature>
<feature type="strand" evidence="4">
    <location>
        <begin position="525"/>
        <end position="529"/>
    </location>
</feature>
<feature type="turn" evidence="4">
    <location>
        <begin position="530"/>
        <end position="535"/>
    </location>
</feature>
<feature type="turn" evidence="4">
    <location>
        <begin position="542"/>
        <end position="544"/>
    </location>
</feature>
<feature type="helix" evidence="4">
    <location>
        <begin position="545"/>
        <end position="547"/>
    </location>
</feature>
<feature type="strand" evidence="4">
    <location>
        <begin position="549"/>
        <end position="556"/>
    </location>
</feature>
<feature type="helix" evidence="4">
    <location>
        <begin position="561"/>
        <end position="568"/>
    </location>
</feature>
<feature type="helix" evidence="4">
    <location>
        <begin position="573"/>
        <end position="575"/>
    </location>
</feature>
<feature type="strand" evidence="4">
    <location>
        <begin position="578"/>
        <end position="585"/>
    </location>
</feature>
<feature type="helix" evidence="4">
    <location>
        <begin position="589"/>
        <end position="593"/>
    </location>
</feature>
<feature type="helix" evidence="4">
    <location>
        <begin position="596"/>
        <end position="605"/>
    </location>
</feature>
<feature type="strand" evidence="3">
    <location>
        <begin position="610"/>
        <end position="612"/>
    </location>
</feature>
<feature type="helix" evidence="4">
    <location>
        <begin position="617"/>
        <end position="664"/>
    </location>
</feature>
<feature type="helix" evidence="4">
    <location>
        <begin position="669"/>
        <end position="688"/>
    </location>
</feature>
<feature type="helix" evidence="4">
    <location>
        <begin position="695"/>
        <end position="701"/>
    </location>
</feature>
<feature type="turn" evidence="4">
    <location>
        <begin position="702"/>
        <end position="704"/>
    </location>
</feature>
<feature type="helix" evidence="4">
    <location>
        <begin position="720"/>
        <end position="742"/>
    </location>
</feature>
<feature type="helix" evidence="3">
    <location>
        <begin position="743"/>
        <end position="745"/>
    </location>
</feature>
<feature type="helix" evidence="4">
    <location>
        <begin position="746"/>
        <end position="778"/>
    </location>
</feature>
<feature type="turn" evidence="3">
    <location>
        <begin position="780"/>
        <end position="783"/>
    </location>
</feature>
<feature type="helix" evidence="4">
    <location>
        <begin position="786"/>
        <end position="815"/>
    </location>
</feature>
<gene>
    <name evidence="1" type="primary">secA</name>
    <name type="ordered locus">TM_1578</name>
</gene>
<reference key="1">
    <citation type="journal article" date="1999" name="Nature">
        <title>Evidence for lateral gene transfer between Archaea and Bacteria from genome sequence of Thermotoga maritima.</title>
        <authorList>
            <person name="Nelson K.E."/>
            <person name="Clayton R.A."/>
            <person name="Gill S.R."/>
            <person name="Gwinn M.L."/>
            <person name="Dodson R.J."/>
            <person name="Haft D.H."/>
            <person name="Hickey E.K."/>
            <person name="Peterson J.D."/>
            <person name="Nelson W.C."/>
            <person name="Ketchum K.A."/>
            <person name="McDonald L.A."/>
            <person name="Utterback T.R."/>
            <person name="Malek J.A."/>
            <person name="Linher K.D."/>
            <person name="Garrett M.M."/>
            <person name="Stewart A.M."/>
            <person name="Cotton M.D."/>
            <person name="Pratt M.S."/>
            <person name="Phillips C.A."/>
            <person name="Richardson D.L."/>
            <person name="Heidelberg J.F."/>
            <person name="Sutton G.G."/>
            <person name="Fleischmann R.D."/>
            <person name="Eisen J.A."/>
            <person name="White O."/>
            <person name="Salzberg S.L."/>
            <person name="Smith H.O."/>
            <person name="Venter J.C."/>
            <person name="Fraser C.M."/>
        </authorList>
    </citation>
    <scope>NUCLEOTIDE SEQUENCE [LARGE SCALE GENOMIC DNA]</scope>
    <source>
        <strain>ATCC 43589 / DSM 3109 / JCM 10099 / NBRC 100826 / MSB8</strain>
    </source>
</reference>
<reference key="2">
    <citation type="journal article" date="2008" name="Nature">
        <title>Structure of a complex of the ATPase SecA and the protein-translocation channel.</title>
        <authorList>
            <person name="Zimmer J."/>
            <person name="Nam Y."/>
            <person name="Rapoport T.A."/>
        </authorList>
    </citation>
    <scope>X-RAY CRYSTALLOGRAPHY (4.50 ANGSTROMS) IN COMPLEX WITH SECYEG</scope>
</reference>
<reference key="3">
    <citation type="journal article" date="2009" name="J. Mol. Biol.">
        <title>Conformational flexibility and peptide interaction of the translocation ATPase SecA.</title>
        <authorList>
            <person name="Zimmer J."/>
            <person name="Rapoport T.A."/>
        </authorList>
    </citation>
    <scope>X-RAY CRYSTALLOGRAPHY (3.1 ANGSTROMS) OF 1-816</scope>
</reference>
<sequence length="871" mass="100486">MILFDKNKRILKKYAKMVSKINQIESDLRSKKNSELIRLSMVLKEKVNSFEDADEHLFEAFALVREAARRTLGMRPFDVQVMGGIALHEGKVAEMKTGEGKTLAATMPIYLNALIGKGVHLVTVNDYLARRDALWMGPVYLFLGLRVGVINSLGKSYEVVWKNPDLARKAIEENWSVWPDGFNGEVLKEESMNKEAVEAFQVELKEITRKEAYLCDVTYGTNNEFGFDYLRDNLVLDYNDKVQRGHFYAIVDEADSVLIDEARTPLIISGPSKESPSVYRRFAQIAKKFVKDKDFTVDEKARTIILTEEGVAKAEKIIGVENLYDPGNVSLLYHLINALKALHLFKKDVDYVVMNGEVIIVDEFTGRLLPGRRYSGGLHQAIEAKEGVPIKEESITYATITFQNYFRMYEKLAGMTGTAKTEESEFVQVYGMEVVVIPTHKPMIRKDHDDLVFRTQKEKYEKIVEEIEKRYKKGQPVLVGTTSIEKSELLSSMLKKKGIPHQVLNAKYHEKEAEIVAKAGQKGMVTIATNMAGRGTDIKLGPGVAELGGLCIIGTERHESRRIDNQLRGRAGRQGDPGESIFFLSLEDDLLRIFGSEQIGKVMNILKIEEGQPIQHPMLSKLIENIQKKVEGINFSIRKTLMEMDDVLDKQRRAVYSLRDQILLEKDYDEYLKDIFEDVVSTRVEEFCSGKNWDIESLKNSLSFFPAGLFDLDEKQFSSSEELHDYLFNRLWEEYQRKKQEIGEDYRKVIRFLMLRIIDDHWRRYLEEVEHVKEAVQLRSYGQKDPIVEFKKETYYMFDEMMRRINDTIANYVLRVVKVSEKDEKEAKEELGKIRLVHEEFNLVNRAMRRATEKKKKKDGLHSFGRIRVKR</sequence>
<protein>
    <recommendedName>
        <fullName evidence="1">Protein translocase subunit SecA</fullName>
        <ecNumber evidence="1">7.4.2.8</ecNumber>
    </recommendedName>
</protein>
<evidence type="ECO:0000255" key="1">
    <source>
        <dbReference type="HAMAP-Rule" id="MF_01382"/>
    </source>
</evidence>
<evidence type="ECO:0000269" key="2">
    <source>
    </source>
</evidence>
<evidence type="ECO:0007829" key="3">
    <source>
        <dbReference type="PDB" id="3JUX"/>
    </source>
</evidence>
<evidence type="ECO:0007829" key="4">
    <source>
        <dbReference type="PDB" id="4YS0"/>
    </source>
</evidence>
<name>SECA_THEMA</name>
<proteinExistence type="evidence at protein level"/>
<accession>Q9X1R4</accession>
<organism>
    <name type="scientific">Thermotoga maritima (strain ATCC 43589 / DSM 3109 / JCM 10099 / NBRC 100826 / MSB8)</name>
    <dbReference type="NCBI Taxonomy" id="243274"/>
    <lineage>
        <taxon>Bacteria</taxon>
        <taxon>Thermotogati</taxon>
        <taxon>Thermotogota</taxon>
        <taxon>Thermotogae</taxon>
        <taxon>Thermotogales</taxon>
        <taxon>Thermotogaceae</taxon>
        <taxon>Thermotoga</taxon>
    </lineage>
</organism>
<dbReference type="EC" id="7.4.2.8" evidence="1"/>
<dbReference type="EMBL" id="AE000512">
    <property type="protein sequence ID" value="AAD36645.1"/>
    <property type="molecule type" value="Genomic_DNA"/>
</dbReference>
<dbReference type="PIR" id="C72238">
    <property type="entry name" value="C72238"/>
</dbReference>
<dbReference type="RefSeq" id="NP_229378.1">
    <property type="nucleotide sequence ID" value="NC_000853.1"/>
</dbReference>
<dbReference type="RefSeq" id="WP_004082002.1">
    <property type="nucleotide sequence ID" value="NZ_CP011107.1"/>
</dbReference>
<dbReference type="PDB" id="3DIN">
    <property type="method" value="X-ray"/>
    <property type="resolution" value="4.50 A"/>
    <property type="chains" value="A/B=1-871"/>
</dbReference>
<dbReference type="PDB" id="3JUX">
    <property type="method" value="X-ray"/>
    <property type="resolution" value="3.10 A"/>
    <property type="chains" value="A=1-816"/>
</dbReference>
<dbReference type="PDB" id="4YS0">
    <property type="method" value="X-ray"/>
    <property type="resolution" value="1.90 A"/>
    <property type="chains" value="A=1-816"/>
</dbReference>
<dbReference type="PDBsum" id="3DIN"/>
<dbReference type="PDBsum" id="3JUX"/>
<dbReference type="PDBsum" id="4YS0"/>
<dbReference type="SMR" id="Q9X1R4"/>
<dbReference type="DIP" id="DIP-59806N"/>
<dbReference type="FunCoup" id="Q9X1R4">
    <property type="interactions" value="407"/>
</dbReference>
<dbReference type="IntAct" id="Q9X1R4">
    <property type="interactions" value="1"/>
</dbReference>
<dbReference type="STRING" id="243274.TM_1578"/>
<dbReference type="TCDB" id="3.A.5.1.4">
    <property type="family name" value="the general secretory pathway (sec) family"/>
</dbReference>
<dbReference type="PaxDb" id="243274-THEMA_06390"/>
<dbReference type="EnsemblBacteria" id="AAD36645">
    <property type="protein sequence ID" value="AAD36645"/>
    <property type="gene ID" value="TM_1578"/>
</dbReference>
<dbReference type="KEGG" id="tma:TM1578"/>
<dbReference type="KEGG" id="tmi:THEMA_06390"/>
<dbReference type="KEGG" id="tmm:Tmari_1586"/>
<dbReference type="KEGG" id="tmw:THMA_1613"/>
<dbReference type="eggNOG" id="COG0653">
    <property type="taxonomic scope" value="Bacteria"/>
</dbReference>
<dbReference type="InParanoid" id="Q9X1R4"/>
<dbReference type="OrthoDB" id="9805579at2"/>
<dbReference type="BRENDA" id="7.4.2.5">
    <property type="organism ID" value="6331"/>
</dbReference>
<dbReference type="EvolutionaryTrace" id="Q9X1R4"/>
<dbReference type="Proteomes" id="UP000008183">
    <property type="component" value="Chromosome"/>
</dbReference>
<dbReference type="GO" id="GO:0031522">
    <property type="term" value="C:cell envelope Sec protein transport complex"/>
    <property type="evidence" value="ECO:0000318"/>
    <property type="project" value="GO_Central"/>
</dbReference>
<dbReference type="GO" id="GO:0005737">
    <property type="term" value="C:cytoplasm"/>
    <property type="evidence" value="ECO:0007669"/>
    <property type="project" value="UniProtKB-SubCell"/>
</dbReference>
<dbReference type="GO" id="GO:0005886">
    <property type="term" value="C:plasma membrane"/>
    <property type="evidence" value="ECO:0000318"/>
    <property type="project" value="GO_Central"/>
</dbReference>
<dbReference type="GO" id="GO:0005524">
    <property type="term" value="F:ATP binding"/>
    <property type="evidence" value="ECO:0000318"/>
    <property type="project" value="GO_Central"/>
</dbReference>
<dbReference type="GO" id="GO:0008564">
    <property type="term" value="F:protein-exporting ATPase activity"/>
    <property type="evidence" value="ECO:0007669"/>
    <property type="project" value="UniProtKB-EC"/>
</dbReference>
<dbReference type="GO" id="GO:0065002">
    <property type="term" value="P:intracellular protein transmembrane transport"/>
    <property type="evidence" value="ECO:0007669"/>
    <property type="project" value="UniProtKB-UniRule"/>
</dbReference>
<dbReference type="GO" id="GO:0017038">
    <property type="term" value="P:protein import"/>
    <property type="evidence" value="ECO:0007669"/>
    <property type="project" value="InterPro"/>
</dbReference>
<dbReference type="GO" id="GO:0006605">
    <property type="term" value="P:protein targeting"/>
    <property type="evidence" value="ECO:0007669"/>
    <property type="project" value="UniProtKB-UniRule"/>
</dbReference>
<dbReference type="GO" id="GO:0043952">
    <property type="term" value="P:protein transport by the Sec complex"/>
    <property type="evidence" value="ECO:0000318"/>
    <property type="project" value="GO_Central"/>
</dbReference>
<dbReference type="CDD" id="cd17928">
    <property type="entry name" value="DEXDc_SecA"/>
    <property type="match status" value="1"/>
</dbReference>
<dbReference type="CDD" id="cd18803">
    <property type="entry name" value="SF2_C_secA"/>
    <property type="match status" value="1"/>
</dbReference>
<dbReference type="FunFam" id="3.40.50.300:FF:000694">
    <property type="entry name" value="Preprotein translocase subunit SecA"/>
    <property type="match status" value="1"/>
</dbReference>
<dbReference type="FunFam" id="3.40.50.300:FF:003148">
    <property type="entry name" value="Protein translocase subunit SecA"/>
    <property type="match status" value="1"/>
</dbReference>
<dbReference type="Gene3D" id="1.10.3060.10">
    <property type="entry name" value="Helical scaffold and wing domains of SecA"/>
    <property type="match status" value="1"/>
</dbReference>
<dbReference type="Gene3D" id="3.40.50.300">
    <property type="entry name" value="P-loop containing nucleotide triphosphate hydrolases"/>
    <property type="match status" value="3"/>
</dbReference>
<dbReference type="HAMAP" id="MF_01382">
    <property type="entry name" value="SecA"/>
    <property type="match status" value="1"/>
</dbReference>
<dbReference type="InterPro" id="IPR014001">
    <property type="entry name" value="Helicase_ATP-bd"/>
</dbReference>
<dbReference type="InterPro" id="IPR001650">
    <property type="entry name" value="Helicase_C-like"/>
</dbReference>
<dbReference type="InterPro" id="IPR027417">
    <property type="entry name" value="P-loop_NTPase"/>
</dbReference>
<dbReference type="InterPro" id="IPR000185">
    <property type="entry name" value="SecA"/>
</dbReference>
<dbReference type="InterPro" id="IPR020937">
    <property type="entry name" value="SecA_CS"/>
</dbReference>
<dbReference type="InterPro" id="IPR011115">
    <property type="entry name" value="SecA_DEAD"/>
</dbReference>
<dbReference type="InterPro" id="IPR014018">
    <property type="entry name" value="SecA_motor_DEAD"/>
</dbReference>
<dbReference type="InterPro" id="IPR011130">
    <property type="entry name" value="SecA_preprotein_X-link_dom"/>
</dbReference>
<dbReference type="InterPro" id="IPR044722">
    <property type="entry name" value="SecA_SF2_C"/>
</dbReference>
<dbReference type="InterPro" id="IPR011116">
    <property type="entry name" value="SecA_Wing/Scaffold"/>
</dbReference>
<dbReference type="InterPro" id="IPR036266">
    <property type="entry name" value="SecA_Wing/Scaffold_sf"/>
</dbReference>
<dbReference type="InterPro" id="IPR036670">
    <property type="entry name" value="SecA_X-link_sf"/>
</dbReference>
<dbReference type="PANTHER" id="PTHR30612:SF0">
    <property type="entry name" value="CHLOROPLAST PROTEIN-TRANSPORTING ATPASE"/>
    <property type="match status" value="1"/>
</dbReference>
<dbReference type="PANTHER" id="PTHR30612">
    <property type="entry name" value="SECA INNER MEMBRANE COMPONENT OF SEC PROTEIN SECRETION SYSTEM"/>
    <property type="match status" value="1"/>
</dbReference>
<dbReference type="Pfam" id="PF21090">
    <property type="entry name" value="P-loop_SecA"/>
    <property type="match status" value="2"/>
</dbReference>
<dbReference type="Pfam" id="PF07517">
    <property type="entry name" value="SecA_DEAD"/>
    <property type="match status" value="1"/>
</dbReference>
<dbReference type="Pfam" id="PF01043">
    <property type="entry name" value="SecA_PP_bind"/>
    <property type="match status" value="1"/>
</dbReference>
<dbReference type="Pfam" id="PF07516">
    <property type="entry name" value="SecA_SW"/>
    <property type="match status" value="1"/>
</dbReference>
<dbReference type="PRINTS" id="PR00906">
    <property type="entry name" value="SECA"/>
</dbReference>
<dbReference type="SMART" id="SM00957">
    <property type="entry name" value="SecA_DEAD"/>
    <property type="match status" value="1"/>
</dbReference>
<dbReference type="SMART" id="SM00958">
    <property type="entry name" value="SecA_PP_bind"/>
    <property type="match status" value="1"/>
</dbReference>
<dbReference type="SUPFAM" id="SSF81886">
    <property type="entry name" value="Helical scaffold and wing domains of SecA"/>
    <property type="match status" value="1"/>
</dbReference>
<dbReference type="SUPFAM" id="SSF52540">
    <property type="entry name" value="P-loop containing nucleoside triphosphate hydrolases"/>
    <property type="match status" value="2"/>
</dbReference>
<dbReference type="SUPFAM" id="SSF81767">
    <property type="entry name" value="Pre-protein crosslinking domain of SecA"/>
    <property type="match status" value="1"/>
</dbReference>
<dbReference type="PROSITE" id="PS01312">
    <property type="entry name" value="SECA"/>
    <property type="match status" value="1"/>
</dbReference>
<dbReference type="PROSITE" id="PS51196">
    <property type="entry name" value="SECA_MOTOR_DEAD"/>
    <property type="match status" value="1"/>
</dbReference>
<keyword id="KW-0002">3D-structure</keyword>
<keyword id="KW-0067">ATP-binding</keyword>
<keyword id="KW-0997">Cell inner membrane</keyword>
<keyword id="KW-1003">Cell membrane</keyword>
<keyword id="KW-0963">Cytoplasm</keyword>
<keyword id="KW-0472">Membrane</keyword>
<keyword id="KW-0547">Nucleotide-binding</keyword>
<keyword id="KW-0653">Protein transport</keyword>
<keyword id="KW-1185">Reference proteome</keyword>
<keyword id="KW-1278">Translocase</keyword>
<keyword id="KW-0811">Translocation</keyword>
<keyword id="KW-0813">Transport</keyword>